<proteinExistence type="evidence at protein level"/>
<sequence>RICYNHLGTKPPTTETCQEDSCYKNIWTFDNIIRRGCGCFTPRGDMPGPYCCESDKCNL</sequence>
<name>3SPM_DENJA</name>
<dbReference type="PIR" id="A42561">
    <property type="entry name" value="T6EP5J"/>
</dbReference>
<dbReference type="PDB" id="1DRS">
    <property type="method" value="NMR"/>
    <property type="chains" value="A=1-59"/>
</dbReference>
<dbReference type="PDB" id="2LA1">
    <property type="method" value="NMR"/>
    <property type="chains" value="A=1-59"/>
</dbReference>
<dbReference type="PDBsum" id="1DRS"/>
<dbReference type="PDBsum" id="2LA1"/>
<dbReference type="BMRB" id="P28375"/>
<dbReference type="SMR" id="P28375"/>
<dbReference type="EvolutionaryTrace" id="P28375"/>
<dbReference type="GO" id="GO:0005576">
    <property type="term" value="C:extracellular region"/>
    <property type="evidence" value="ECO:0007669"/>
    <property type="project" value="UniProtKB-SubCell"/>
</dbReference>
<dbReference type="GO" id="GO:0090729">
    <property type="term" value="F:toxin activity"/>
    <property type="evidence" value="ECO:0007669"/>
    <property type="project" value="UniProtKB-KW"/>
</dbReference>
<dbReference type="CDD" id="cd00206">
    <property type="entry name" value="TFP_snake_toxin"/>
    <property type="match status" value="1"/>
</dbReference>
<dbReference type="Gene3D" id="2.10.60.10">
    <property type="entry name" value="CD59"/>
    <property type="match status" value="1"/>
</dbReference>
<dbReference type="InterPro" id="IPR003571">
    <property type="entry name" value="Snake_3FTx"/>
</dbReference>
<dbReference type="InterPro" id="IPR045860">
    <property type="entry name" value="Snake_toxin-like_sf"/>
</dbReference>
<dbReference type="SUPFAM" id="SSF57302">
    <property type="entry name" value="Snake toxin-like"/>
    <property type="match status" value="1"/>
</dbReference>
<comment type="function">
    <text evidence="3 4 5">Inhibits ADP-induced platelet aggregation and inhibits the binding of purified platelet fibrinogen receptor alpha-IIb/beta-3 (ITGA2B/ITGB3) to immobilized fibrinogen (PubMed:1591238). Has also been described to inhibit cell adhesion to fibrinogen, fibronectin, laminin and collagen (PubMed:11336631, PubMed:16798616).</text>
</comment>
<comment type="subcellular location">
    <subcellularLocation>
        <location evidence="4">Secreted</location>
    </subcellularLocation>
</comment>
<comment type="tissue specificity">
    <text evidence="12">Expressed by the venom gland.</text>
</comment>
<comment type="similarity">
    <text evidence="12">Belongs to the three-finger toxin family. Short-chain subfamily. Antiplatelet toxin sub-subfamily.</text>
</comment>
<evidence type="ECO:0000255" key="1"/>
<evidence type="ECO:0000269" key="2">
    <source>
    </source>
</evidence>
<evidence type="ECO:0000269" key="3">
    <source>
    </source>
</evidence>
<evidence type="ECO:0000269" key="4">
    <source>
    </source>
</evidence>
<evidence type="ECO:0000269" key="5">
    <source>
    </source>
</evidence>
<evidence type="ECO:0000269" key="6">
    <source>
    </source>
</evidence>
<evidence type="ECO:0000269" key="7">
    <source>
    </source>
</evidence>
<evidence type="ECO:0000303" key="8">
    <source>
    </source>
</evidence>
<evidence type="ECO:0000303" key="9">
    <source>
    </source>
</evidence>
<evidence type="ECO:0000303" key="10">
    <source>
    </source>
</evidence>
<evidence type="ECO:0000303" key="11">
    <source>
    </source>
</evidence>
<evidence type="ECO:0000305" key="12"/>
<evidence type="ECO:0000312" key="13">
    <source>
        <dbReference type="PDB" id="1DRS"/>
    </source>
</evidence>
<evidence type="ECO:0000312" key="14">
    <source>
        <dbReference type="PDB" id="2LA1"/>
    </source>
</evidence>
<evidence type="ECO:0007829" key="15">
    <source>
        <dbReference type="PDB" id="1DRS"/>
    </source>
</evidence>
<evidence type="ECO:0007829" key="16">
    <source>
        <dbReference type="PDB" id="2LA1"/>
    </source>
</evidence>
<reference key="1">
    <citation type="journal article" date="1992" name="Biochemistry">
        <title>Mambin, a potent glycoprotein IIb-IIIa antagonist and platelet aggregation inhibitor structurally related to the short neurotoxins.</title>
        <authorList>
            <person name="McDowell R.S."/>
            <person name="Dennis M.S."/>
            <person name="Louie A."/>
            <person name="Shuster M."/>
            <person name="Mulkerrin M.G."/>
            <person name="Lazarus R.A."/>
        </authorList>
    </citation>
    <scope>PROTEIN SEQUENCE</scope>
    <scope>FUNCTION</scope>
    <scope>SUBCELLULAR LOCATION</scope>
    <source>
        <tissue>Venom</tissue>
    </source>
</reference>
<reference key="2">
    <citation type="journal article" date="2001" name="Biochem. J.">
        <title>Evaluation of the role of proline residues flanking the RGD motif of dendroaspin, an inhibitior of platelet aggregation and cell adhesion.</title>
        <authorList>
            <person name="Lu X."/>
            <person name="Sun Y."/>
            <person name="Shang D."/>
            <person name="Wattam B."/>
            <person name="Egglezou S."/>
            <person name="Hughes T."/>
            <person name="Hyde E."/>
            <person name="Scully M."/>
            <person name="Kakkar V."/>
        </authorList>
    </citation>
    <scope>MUTAGENESIS OF PRO-42; PRO-47; PRO-49; 42-PRO--PRO-47 AND 47-PRO--PRO-49</scope>
    <scope>FUNCTION</scope>
</reference>
<reference key="3">
    <citation type="journal article" date="2001" name="Biochem. J.">
        <title>Arg-Tyr-Asp (RYD) and Arg-Cys-Asp (RCD) motifs in dendroaspin promote selective inhibition of beta1 and beta3 integrins.</title>
        <authorList>
            <person name="Wattam B."/>
            <person name="Shang D."/>
            <person name="Rahman S."/>
            <person name="Egglezou S."/>
            <person name="Scully M."/>
            <person name="Kakkar V."/>
            <person name="Lu X."/>
        </authorList>
    </citation>
    <scope>MUTAGENESIS OF GLY-44</scope>
    <scope>FUNCTION</scope>
</reference>
<reference key="4">
    <citation type="journal article" date="2006" name="Cell Commun. Adhes.">
        <title>The effect of the single substitution of arginine within the RGD tripeptide motif of a modified neurotoxin dendroaspin on its activity of platelet aggregation and cell adhesion.</title>
        <authorList>
            <person name="Lu X."/>
            <person name="Davies J."/>
            <person name="Lu D."/>
            <person name="Xia M."/>
            <person name="Wattam B."/>
            <person name="Shang D."/>
            <person name="Sun Y."/>
            <person name="Scully M."/>
            <person name="Kakkar V."/>
        </authorList>
    </citation>
    <scope>MUTAGENESIS OF ARG-43</scope>
    <scope>FUNCTION</scope>
</reference>
<reference key="5">
    <citation type="journal article" date="1994" name="Nat. Struct. Biol.">
        <title>Three-dimensional structure of the RGD-containing neurotoxin homologue dendroaspin.</title>
        <authorList>
            <person name="Sutcliffe M.J."/>
            <person name="Jaseja M."/>
            <person name="Hyde E.I."/>
            <person name="Lu X."/>
            <person name="Williams J.A."/>
        </authorList>
    </citation>
    <scope>STRUCTURE BY NMR</scope>
    <scope>DISULFIDE BONDS</scope>
</reference>
<reference key="6">
    <citation type="journal article" date="1994" name="Eur. J. Biochem.">
        <title>1H-NMR assignments and secondary structure of dendroaspin, an RGD-containing glycoprotein IIb-IIIa (alpha IIb-beta 3) antagonist with a neurotoxin fold.</title>
        <authorList>
            <person name="Jaseja M."/>
            <person name="Lu X."/>
            <person name="Williams J.A."/>
            <person name="Sutcliffe M.J."/>
            <person name="Kakkar V.V."/>
            <person name="Parslow R.A."/>
            <person name="Hyde E.I."/>
        </authorList>
    </citation>
    <scope>STRUCTURE BY NMR</scope>
    <scope>DISULFIDE BONDS</scope>
</reference>
<protein>
    <recommendedName>
        <fullName evidence="9 10 11">Dendroaspin</fullName>
    </recommendedName>
    <alternativeName>
        <fullName>Glycoprotein IIb-IIIa antagonist</fullName>
    </alternativeName>
    <alternativeName>
        <fullName evidence="8">Mambin</fullName>
    </alternativeName>
    <alternativeName>
        <fullName>Platelet aggregation inhibitor</fullName>
    </alternativeName>
</protein>
<accession>P28375</accession>
<organism>
    <name type="scientific">Dendroaspis jamesoni kaimosae</name>
    <name type="common">Eastern Jameson's mamba</name>
    <dbReference type="NCBI Taxonomy" id="8619"/>
    <lineage>
        <taxon>Eukaryota</taxon>
        <taxon>Metazoa</taxon>
        <taxon>Chordata</taxon>
        <taxon>Craniata</taxon>
        <taxon>Vertebrata</taxon>
        <taxon>Euteleostomi</taxon>
        <taxon>Lepidosauria</taxon>
        <taxon>Squamata</taxon>
        <taxon>Bifurcata</taxon>
        <taxon>Unidentata</taxon>
        <taxon>Episquamata</taxon>
        <taxon>Toxicofera</taxon>
        <taxon>Serpentes</taxon>
        <taxon>Colubroidea</taxon>
        <taxon>Elapidae</taxon>
        <taxon>Elapinae</taxon>
        <taxon>Dendroaspis</taxon>
    </lineage>
</organism>
<keyword id="KW-0002">3D-structure</keyword>
<keyword id="KW-1217">Cell adhesion impairing toxin</keyword>
<keyword id="KW-0903">Direct protein sequencing</keyword>
<keyword id="KW-1015">Disulfide bond</keyword>
<keyword id="KW-1199">Hemostasis impairing toxin</keyword>
<keyword id="KW-1201">Platelet aggregation inhibiting toxin</keyword>
<keyword id="KW-0964">Secreted</keyword>
<keyword id="KW-0800">Toxin</keyword>
<feature type="chain" id="PRO_0000093659" description="Dendroaspin" evidence="4">
    <location>
        <begin position="1"/>
        <end position="59"/>
    </location>
</feature>
<feature type="short sequence motif" description="Cell attachment site" evidence="1">
    <location>
        <begin position="43"/>
        <end position="45"/>
    </location>
</feature>
<feature type="disulfide bond" evidence="6 7 13 14">
    <location>
        <begin position="3"/>
        <end position="22"/>
    </location>
</feature>
<feature type="disulfide bond" evidence="6 7 13 14">
    <location>
        <begin position="17"/>
        <end position="37"/>
    </location>
</feature>
<feature type="disulfide bond" evidence="6 7 13 14">
    <location>
        <begin position="39"/>
        <end position="51"/>
    </location>
</feature>
<feature type="disulfide bond" evidence="6 7 13 14">
    <location>
        <begin position="52"/>
        <end position="57"/>
    </location>
</feature>
<feature type="mutagenesis site" description="7-fold loss of ability to inhibit ADP-induced platelet aggregation." evidence="2">
    <original>PRGDMP</original>
    <variation>ARGDMA</variation>
    <location>
        <begin position="42"/>
        <end position="47"/>
    </location>
</feature>
<feature type="mutagenesis site" description="No change in ability to inhibit ADP-induced platelet aggregation." evidence="2">
    <original>P</original>
    <variation>A</variation>
    <location>
        <position position="42"/>
    </location>
</feature>
<feature type="mutagenesis site" description="This mutation alters integrin binding selectivity. It provokes 95-fold loss of ability to inhibit ADP-induced platelet aggregation, 71-fold loss of ability to inhibit A375 cell adhesion to fibrinogen, and almost complete loss of ability to inhibit HEL cell adhesion to fibrinogen." evidence="5">
    <original>R</original>
    <variation>A</variation>
    <location>
        <position position="43"/>
    </location>
</feature>
<feature type="mutagenesis site" description="This mutation alters integrin binding selectivity. It provokes 14-fold loss of ability to inhibit ADP-induced platelet aggregation, 3-fold loss of ability to inhibit A375 cell adhesion to fibrinogen, 8-fold loss of ability to inhibit HEL cell adhesion to fibrinogen." evidence="5">
    <original>R</original>
    <variation>H</variation>
    <location>
        <position position="43"/>
    </location>
</feature>
<feature type="mutagenesis site" description="This mutation alters integrin binding selectivity. It provokes 1.4-fold loss of ability to inhibit ADP-induced platelet aggregation, 6-fold loss of ability to inhibit A375 cell adhesion to fibrinogen and 8-fold loss of ability to inhibit HEL cell adhesion to fibrinogen." evidence="5">
    <original>R</original>
    <variation>K</variation>
    <location>
        <position position="43"/>
    </location>
</feature>
<feature type="mutagenesis site" description="This mutation alters integrin binding selectivity. It provokes 33-fold loss of ability to inhibit ADP-induced platelet aggregation, 5-fold loss of ability to inhibit A375 cell adhesion to fibrinogen, and almost complete loss of ability to inhibit HEL cell adhesion to fibrinogen." evidence="5">
    <original>R</original>
    <variation>Q</variation>
    <location>
        <position position="43"/>
    </location>
</feature>
<feature type="mutagenesis site" description="This mutation promotes selective inhibition of beta-3 integrin; it provokes 1.8-fold loss of ability to inhibit ADP-induced platelet aggregation, 6-fold loss of ability to inhibit A375 cell adhesion to fibrinogen and 330-fold loss of ability to inhibit K562 cell adhesion to fibrinogen." evidence="3">
    <original>G</original>
    <variation>C</variation>
    <location>
        <position position="44"/>
    </location>
</feature>
<feature type="mutagenesis site" description="This mutation promotes selective inhibition of beta-1 integrin; provokes 1.2-fold loss of ability to inhibit ADP-induced platelet aggregation, 11-fold loss of ability to inhibit A375 cell adhesion to fibrinogen and 75-fold loss of ability to inhibit K562 cell adhesion to fibrinogen." evidence="3">
    <original>G</original>
    <variation>Y</variation>
    <location>
        <position position="44"/>
    </location>
</feature>
<feature type="mutagenesis site" description="8.5-fold loss of ability to inhibit ADP-induced platelet aggregation." evidence="2">
    <original>PGP</original>
    <variation>AGA</variation>
    <location>
        <begin position="47"/>
        <end position="49"/>
    </location>
</feature>
<feature type="mutagenesis site" description="No change in ability to inhibit ADP-induced platelet aggregation." evidence="2">
    <original>P</original>
    <variation>A</variation>
    <location>
        <position position="47"/>
    </location>
</feature>
<feature type="mutagenesis site" description="No change in ability to inhibit ADP-induced platelet aggregation." evidence="2">
    <original>P</original>
    <variation>A</variation>
    <location>
        <position position="49"/>
    </location>
</feature>
<feature type="strand" evidence="15">
    <location>
        <begin position="2"/>
        <end position="4"/>
    </location>
</feature>
<feature type="strand" evidence="15">
    <location>
        <begin position="14"/>
        <end position="16"/>
    </location>
</feature>
<feature type="strand" evidence="15">
    <location>
        <begin position="22"/>
        <end position="24"/>
    </location>
</feature>
<feature type="turn" evidence="15">
    <location>
        <begin position="28"/>
        <end position="31"/>
    </location>
</feature>
<feature type="strand" evidence="16">
    <location>
        <begin position="44"/>
        <end position="47"/>
    </location>
</feature>
<feature type="strand" evidence="15">
    <location>
        <begin position="50"/>
        <end position="57"/>
    </location>
</feature>